<proteinExistence type="evidence at protein level"/>
<feature type="transit peptide" description="Chloroplast" evidence="2">
    <location>
        <begin position="1"/>
        <end position="56"/>
    </location>
</feature>
<feature type="chain" id="PRO_0000030436" description="Bifunctional riboflavin biosynthesis protein RIBA 1, chloroplastic">
    <location>
        <begin position="57"/>
        <end position="543"/>
    </location>
</feature>
<feature type="region of interest" description="DHBP synthase">
    <location>
        <begin position="57"/>
        <end position="328"/>
    </location>
</feature>
<feature type="region of interest" description="GTP cyclohydrolase II">
    <location>
        <begin position="329"/>
        <end position="543"/>
    </location>
</feature>
<feature type="active site" description="Proton acceptor; for GTP cyclohydrolase activity" evidence="2">
    <location>
        <position position="457"/>
    </location>
</feature>
<feature type="active site" description="Nucleophile; for GTP cyclohydrolase activity" evidence="1">
    <location>
        <position position="459"/>
    </location>
</feature>
<feature type="binding site" evidence="1">
    <location>
        <begin position="152"/>
        <end position="153"/>
    </location>
    <ligand>
        <name>D-ribulose 5-phosphate</name>
        <dbReference type="ChEBI" id="CHEBI:58121"/>
    </ligand>
</feature>
<feature type="binding site" evidence="1">
    <location>
        <position position="153"/>
    </location>
    <ligand>
        <name>Mg(2+)</name>
        <dbReference type="ChEBI" id="CHEBI:18420"/>
        <label>1</label>
    </ligand>
</feature>
<feature type="binding site" evidence="1">
    <location>
        <position position="153"/>
    </location>
    <ligand>
        <name>Mg(2+)</name>
        <dbReference type="ChEBI" id="CHEBI:18420"/>
        <label>2</label>
    </ligand>
</feature>
<feature type="binding site" evidence="1">
    <location>
        <position position="157"/>
    </location>
    <ligand>
        <name>D-ribulose 5-phosphate</name>
        <dbReference type="ChEBI" id="CHEBI:58121"/>
    </ligand>
</feature>
<feature type="binding site" evidence="1">
    <location>
        <begin position="267"/>
        <end position="271"/>
    </location>
    <ligand>
        <name>D-ribulose 5-phosphate</name>
        <dbReference type="ChEBI" id="CHEBI:58121"/>
    </ligand>
</feature>
<feature type="binding site" evidence="1">
    <location>
        <position position="270"/>
    </location>
    <ligand>
        <name>Mg(2+)</name>
        <dbReference type="ChEBI" id="CHEBI:18420"/>
        <label>2</label>
    </ligand>
</feature>
<feature type="binding site" evidence="1">
    <location>
        <position position="291"/>
    </location>
    <ligand>
        <name>D-ribulose 5-phosphate</name>
        <dbReference type="ChEBI" id="CHEBI:58121"/>
    </ligand>
</feature>
<feature type="binding site" evidence="1">
    <location>
        <begin position="379"/>
        <end position="383"/>
    </location>
    <ligand>
        <name>GTP</name>
        <dbReference type="ChEBI" id="CHEBI:37565"/>
    </ligand>
</feature>
<feature type="binding site" evidence="1">
    <location>
        <position position="384"/>
    </location>
    <ligand>
        <name>Zn(2+)</name>
        <dbReference type="ChEBI" id="CHEBI:29105"/>
        <note>catalytic</note>
    </ligand>
</feature>
<feature type="binding site" evidence="1">
    <location>
        <position position="395"/>
    </location>
    <ligand>
        <name>Zn(2+)</name>
        <dbReference type="ChEBI" id="CHEBI:29105"/>
        <note>catalytic</note>
    </ligand>
</feature>
<feature type="binding site" evidence="1">
    <location>
        <position position="397"/>
    </location>
    <ligand>
        <name>Zn(2+)</name>
        <dbReference type="ChEBI" id="CHEBI:29105"/>
        <note>catalytic</note>
    </ligand>
</feature>
<feature type="binding site" evidence="1">
    <location>
        <position position="400"/>
    </location>
    <ligand>
        <name>GTP</name>
        <dbReference type="ChEBI" id="CHEBI:37565"/>
    </ligand>
</feature>
<feature type="binding site" evidence="1">
    <location>
        <begin position="423"/>
        <end position="425"/>
    </location>
    <ligand>
        <name>GTP</name>
        <dbReference type="ChEBI" id="CHEBI:37565"/>
    </ligand>
</feature>
<feature type="binding site" evidence="1">
    <location>
        <position position="445"/>
    </location>
    <ligand>
        <name>GTP</name>
        <dbReference type="ChEBI" id="CHEBI:37565"/>
    </ligand>
</feature>
<feature type="binding site" evidence="1">
    <location>
        <position position="480"/>
    </location>
    <ligand>
        <name>GTP</name>
        <dbReference type="ChEBI" id="CHEBI:37565"/>
    </ligand>
</feature>
<feature type="binding site" evidence="1">
    <location>
        <position position="485"/>
    </location>
    <ligand>
        <name>GTP</name>
        <dbReference type="ChEBI" id="CHEBI:37565"/>
    </ligand>
</feature>
<feature type="site" description="Essential for DHBP synthase activity" evidence="1">
    <location>
        <position position="253"/>
    </location>
</feature>
<feature type="site" description="Essential for DHBP synthase activity" evidence="1">
    <location>
        <position position="291"/>
    </location>
</feature>
<protein>
    <recommendedName>
        <fullName>Bifunctional riboflavin biosynthesis protein RIBA 1, chloroplastic</fullName>
        <shortName>AtRIBA1</shortName>
    </recommendedName>
    <domain>
        <recommendedName>
            <fullName>3,4-dihydroxy-2-butanone 4-phosphate synthase</fullName>
            <shortName>DHBP synthase</shortName>
            <ecNumber>4.1.99.12</ecNumber>
        </recommendedName>
    </domain>
    <domain>
        <recommendedName>
            <fullName>GTP cyclohydrolase-2</fullName>
            <ecNumber>3.5.4.25</ecNumber>
        </recommendedName>
        <alternativeName>
            <fullName>GTP cyclohydrolase II</fullName>
        </alternativeName>
    </domain>
</protein>
<evidence type="ECO:0000250" key="1"/>
<evidence type="ECO:0000255" key="2"/>
<evidence type="ECO:0000269" key="3">
    <source>
    </source>
</evidence>
<evidence type="ECO:0000269" key="4">
    <source>
    </source>
</evidence>
<evidence type="ECO:0000305" key="5"/>
<sequence>MSSINLSSSSPSTISLSRSRLSQSSTTLLHGLHRVTLPSNHPLSTFSIKTNTGKVKAAVISREDDLLSFTNGNTPLSNGSLIDDRTEEPLEADSVSLGTLAADSAPAPANGFVAEDDDFELDLPTPGFSSIPEAIEDIRQGKLVVVVDDEDRENEGDLVMAAQLATPEAMAFIVRHGTGIVCVSMKEDDLERLHLPLMVNQKENEEKLSTAFTVTVDAKHGTTTGVSARDRATTILSLASRDSKPEDFNRPGHIFPLKYREGGVLKRAGHTEASVDLTVLAGLDPVGVLCEIVDDDGSMARLPKLREFAAENNLKVVSIADLIRYRRKRDKLVERASAARIPTMWGPFTAYCYRSILDGIEHIAMVKGEIGDGQDILVRVHSECLTGDIFGSARCDCGNQLALSMQQIEATGRGVLVYLRGHEGRGIGLGHKLRAYNLQDAGRDTVEANEELGLPVDSREYGIGAQIIRDLGVRTMKLMTNNPAKYVGLKGYGLAIVGRVPLLSLITKENKRYLETKRTKMGHMYGLKFKGDVVEKIESESES</sequence>
<gene>
    <name type="primary">RIBA1</name>
    <name type="synonym">RIBBA</name>
    <name type="ordered locus">At5g64300</name>
    <name type="ORF">MSJ1.14</name>
</gene>
<dbReference type="EC" id="4.1.99.12"/>
<dbReference type="EC" id="3.5.4.25"/>
<dbReference type="EMBL" id="AJ000053">
    <property type="protein sequence ID" value="CAA03884.1"/>
    <property type="molecule type" value="Genomic_DNA"/>
</dbReference>
<dbReference type="EMBL" id="AB008268">
    <property type="protein sequence ID" value="BAB09861.1"/>
    <property type="molecule type" value="Genomic_DNA"/>
</dbReference>
<dbReference type="EMBL" id="CP002688">
    <property type="protein sequence ID" value="AED97867.1"/>
    <property type="molecule type" value="Genomic_DNA"/>
</dbReference>
<dbReference type="EMBL" id="D45165">
    <property type="protein sequence ID" value="BAA08113.1"/>
    <property type="status" value="ALT_INIT"/>
    <property type="molecule type" value="mRNA"/>
</dbReference>
<dbReference type="PIR" id="JC4209">
    <property type="entry name" value="JC4209"/>
</dbReference>
<dbReference type="SMR" id="P47924"/>
<dbReference type="BioGRID" id="21793">
    <property type="interactions" value="2"/>
</dbReference>
<dbReference type="FunCoup" id="P47924">
    <property type="interactions" value="394"/>
</dbReference>
<dbReference type="IntAct" id="P47924">
    <property type="interactions" value="1"/>
</dbReference>
<dbReference type="STRING" id="3702.P47924"/>
<dbReference type="iPTMnet" id="P47924"/>
<dbReference type="PaxDb" id="3702-AT5G64300.1"/>
<dbReference type="ProteomicsDB" id="236579"/>
<dbReference type="EnsemblPlants" id="AT5G64300.1">
    <property type="protein sequence ID" value="AT5G64300.1"/>
    <property type="gene ID" value="AT5G64300"/>
</dbReference>
<dbReference type="GeneID" id="836551"/>
<dbReference type="Gramene" id="AT5G64300.1">
    <property type="protein sequence ID" value="AT5G64300.1"/>
    <property type="gene ID" value="AT5G64300"/>
</dbReference>
<dbReference type="KEGG" id="ath:AT5G64300"/>
<dbReference type="Araport" id="AT5G64300"/>
<dbReference type="TAIR" id="AT5G64300">
    <property type="gene designation" value="GCH"/>
</dbReference>
<dbReference type="eggNOG" id="KOG1284">
    <property type="taxonomic scope" value="Eukaryota"/>
</dbReference>
<dbReference type="HOGENOM" id="CLU_020273_1_1_1"/>
<dbReference type="InParanoid" id="P47924"/>
<dbReference type="OMA" id="TSYCYKS"/>
<dbReference type="PhylomeDB" id="P47924"/>
<dbReference type="BioCyc" id="ARA:AT5G64300-MONOMER"/>
<dbReference type="BioCyc" id="MetaCyc:AT5G64300-MONOMER"/>
<dbReference type="BRENDA" id="4.1.99.12">
    <property type="organism ID" value="399"/>
</dbReference>
<dbReference type="UniPathway" id="UPA00275">
    <property type="reaction ID" value="UER00399"/>
</dbReference>
<dbReference type="UniPathway" id="UPA00275">
    <property type="reaction ID" value="UER00400"/>
</dbReference>
<dbReference type="PRO" id="PR:P47924"/>
<dbReference type="Proteomes" id="UP000006548">
    <property type="component" value="Chromosome 5"/>
</dbReference>
<dbReference type="ExpressionAtlas" id="P47924">
    <property type="expression patterns" value="baseline and differential"/>
</dbReference>
<dbReference type="GO" id="GO:0009507">
    <property type="term" value="C:chloroplast"/>
    <property type="evidence" value="ECO:0000314"/>
    <property type="project" value="UniProtKB"/>
</dbReference>
<dbReference type="GO" id="GO:0009570">
    <property type="term" value="C:chloroplast stroma"/>
    <property type="evidence" value="ECO:0007005"/>
    <property type="project" value="TAIR"/>
</dbReference>
<dbReference type="GO" id="GO:0008686">
    <property type="term" value="F:3,4-dihydroxy-2-butanone-4-phosphate synthase activity"/>
    <property type="evidence" value="ECO:0000314"/>
    <property type="project" value="UniProtKB"/>
</dbReference>
<dbReference type="GO" id="GO:0005525">
    <property type="term" value="F:GTP binding"/>
    <property type="evidence" value="ECO:0007669"/>
    <property type="project" value="UniProtKB-KW"/>
</dbReference>
<dbReference type="GO" id="GO:0003935">
    <property type="term" value="F:GTP cyclohydrolase II activity"/>
    <property type="evidence" value="ECO:0000314"/>
    <property type="project" value="UniProtKB"/>
</dbReference>
<dbReference type="GO" id="GO:0046872">
    <property type="term" value="F:metal ion binding"/>
    <property type="evidence" value="ECO:0007669"/>
    <property type="project" value="UniProtKB-KW"/>
</dbReference>
<dbReference type="GO" id="GO:0009231">
    <property type="term" value="P:riboflavin biosynthetic process"/>
    <property type="evidence" value="ECO:0000315"/>
    <property type="project" value="UniProtKB"/>
</dbReference>
<dbReference type="CDD" id="cd00641">
    <property type="entry name" value="GTP_cyclohydro2"/>
    <property type="match status" value="1"/>
</dbReference>
<dbReference type="FunFam" id="3.90.870.10:FF:000005">
    <property type="entry name" value="Bifunctional riboflavin biosynthesis protein RIBA 1 chloroplastic"/>
    <property type="match status" value="1"/>
</dbReference>
<dbReference type="FunFam" id="3.40.50.10990:FF:000001">
    <property type="entry name" value="Riboflavin biosynthesis protein RibBA"/>
    <property type="match status" value="1"/>
</dbReference>
<dbReference type="Gene3D" id="3.90.870.10">
    <property type="entry name" value="DHBP synthase"/>
    <property type="match status" value="1"/>
</dbReference>
<dbReference type="Gene3D" id="3.40.50.10990">
    <property type="entry name" value="GTP cyclohydrolase II"/>
    <property type="match status" value="1"/>
</dbReference>
<dbReference type="HAMAP" id="MF_00179">
    <property type="entry name" value="RibA"/>
    <property type="match status" value="1"/>
</dbReference>
<dbReference type="HAMAP" id="MF_00180">
    <property type="entry name" value="RibB"/>
    <property type="match status" value="1"/>
</dbReference>
<dbReference type="HAMAP" id="MF_01283">
    <property type="entry name" value="RibBA"/>
    <property type="match status" value="1"/>
</dbReference>
<dbReference type="InterPro" id="IPR017945">
    <property type="entry name" value="DHBP_synth_RibB-like_a/b_dom"/>
</dbReference>
<dbReference type="InterPro" id="IPR000422">
    <property type="entry name" value="DHBP_synthase_RibB"/>
</dbReference>
<dbReference type="InterPro" id="IPR032677">
    <property type="entry name" value="GTP_cyclohydro_II"/>
</dbReference>
<dbReference type="InterPro" id="IPR000926">
    <property type="entry name" value="RibA"/>
</dbReference>
<dbReference type="InterPro" id="IPR036144">
    <property type="entry name" value="RibA-like_sf"/>
</dbReference>
<dbReference type="InterPro" id="IPR016299">
    <property type="entry name" value="Riboflavin_synth_RibBA"/>
</dbReference>
<dbReference type="NCBIfam" id="NF001591">
    <property type="entry name" value="PRK00393.1"/>
    <property type="match status" value="1"/>
</dbReference>
<dbReference type="NCBIfam" id="NF006803">
    <property type="entry name" value="PRK09311.1"/>
    <property type="match status" value="1"/>
</dbReference>
<dbReference type="NCBIfam" id="TIGR00505">
    <property type="entry name" value="ribA"/>
    <property type="match status" value="1"/>
</dbReference>
<dbReference type="NCBIfam" id="TIGR00506">
    <property type="entry name" value="ribB"/>
    <property type="match status" value="1"/>
</dbReference>
<dbReference type="PANTHER" id="PTHR21327:SF48">
    <property type="entry name" value="BIFUNCTIONAL RIBOFLAVIN BIOSYNTHESIS PROTEIN RIBA 1, CHLOROPLASTIC"/>
    <property type="match status" value="1"/>
</dbReference>
<dbReference type="PANTHER" id="PTHR21327">
    <property type="entry name" value="GTP CYCLOHYDROLASE II-RELATED"/>
    <property type="match status" value="1"/>
</dbReference>
<dbReference type="Pfam" id="PF00926">
    <property type="entry name" value="DHBP_synthase"/>
    <property type="match status" value="1"/>
</dbReference>
<dbReference type="Pfam" id="PF00925">
    <property type="entry name" value="GTP_cyclohydro2"/>
    <property type="match status" value="1"/>
</dbReference>
<dbReference type="SUPFAM" id="SSF142695">
    <property type="entry name" value="RibA-like"/>
    <property type="match status" value="1"/>
</dbReference>
<dbReference type="SUPFAM" id="SSF55821">
    <property type="entry name" value="YrdC/RibB"/>
    <property type="match status" value="1"/>
</dbReference>
<accession>P47924</accession>
<accession>Q9SBA8</accession>
<name>RIBA1_ARATH</name>
<reference key="1">
    <citation type="journal article" date="2000" name="Phytochemistry">
        <title>Biosynthesis of riboflavin in plants. The ribA gene of Arabidopsis thaliana specifies a bifunctional GTP cyclohydrolase II/3,4-dihydroxy-2-butanone 4-phosphate synthase.</title>
        <authorList>
            <person name="Herz S.W."/>
            <person name="Eberhardt S."/>
            <person name="Bacher A."/>
        </authorList>
    </citation>
    <scope>NUCLEOTIDE SEQUENCE [GENOMIC DNA]</scope>
</reference>
<reference key="2">
    <citation type="journal article" date="1997" name="DNA Res.">
        <title>Structural analysis of Arabidopsis thaliana chromosome 5. III. Sequence features of the regions of 1,191,918 bp covered by seventeen physically assigned P1 clones.</title>
        <authorList>
            <person name="Nakamura Y."/>
            <person name="Sato S."/>
            <person name="Kaneko T."/>
            <person name="Kotani H."/>
            <person name="Asamizu E."/>
            <person name="Miyajima N."/>
            <person name="Tabata S."/>
        </authorList>
    </citation>
    <scope>NUCLEOTIDE SEQUENCE [LARGE SCALE GENOMIC DNA]</scope>
    <source>
        <strain>cv. Columbia</strain>
    </source>
</reference>
<reference key="3">
    <citation type="journal article" date="2017" name="Plant J.">
        <title>Araport11: a complete reannotation of the Arabidopsis thaliana reference genome.</title>
        <authorList>
            <person name="Cheng C.Y."/>
            <person name="Krishnakumar V."/>
            <person name="Chan A.P."/>
            <person name="Thibaud-Nissen F."/>
            <person name="Schobel S."/>
            <person name="Town C.D."/>
        </authorList>
    </citation>
    <scope>GENOME REANNOTATION</scope>
    <source>
        <strain>cv. Columbia</strain>
    </source>
</reference>
<reference key="4">
    <citation type="journal article" date="1995" name="Gene">
        <title>Isolation of cDNAs encoding GTP cyclohydrolase II from Arabidopsis thaliana.</title>
        <authorList>
            <person name="Kobayashi M."/>
            <person name="Sugiyama M."/>
            <person name="Yamamoto K."/>
        </authorList>
    </citation>
    <scope>NUCLEOTIDE SEQUENCE [MRNA] OF 279-543</scope>
</reference>
<reference key="5">
    <citation type="journal article" date="2009" name="Plant Physiol.">
        <title>Large-scale Arabidopsis phosphoproteome profiling reveals novel chloroplast kinase substrates and phosphorylation networks.</title>
        <authorList>
            <person name="Reiland S."/>
            <person name="Messerli G."/>
            <person name="Baerenfaller K."/>
            <person name="Gerrits B."/>
            <person name="Endler A."/>
            <person name="Grossmann J."/>
            <person name="Gruissem W."/>
            <person name="Baginsky S."/>
        </authorList>
    </citation>
    <scope>IDENTIFICATION BY MASS SPECTROMETRY [LARGE SCALE ANALYSIS]</scope>
</reference>
<reference key="6">
    <citation type="journal article" date="2012" name="Int. J. Mol. Sci.">
        <title>Arabidopsis RIBA Proteins: two out of three isoforms have lost their bifunctional activity in riboflavin biosynthesis.</title>
        <authorList>
            <person name="Hiltunen H.M."/>
            <person name="Illarionov B."/>
            <person name="Hedtke B."/>
            <person name="Fischer M."/>
            <person name="Grimm B."/>
        </authorList>
    </citation>
    <scope>FUNCTION</scope>
    <scope>CATALYTIC ACTIVITY</scope>
    <scope>TISSUE SPECIFICITY</scope>
    <scope>SUBCELLULAR LOCATION</scope>
</reference>
<reference key="7">
    <citation type="journal article" date="2012" name="Plant Mol. Biol.">
        <title>Deficiency in riboflavin biosynthesis affects tetrapyrrole biosynthesis in etiolated Arabidopsis tissue.</title>
        <authorList>
            <person name="Hedtke B."/>
            <person name="Alawady A."/>
            <person name="Albacete A."/>
            <person name="Kobayashi K."/>
            <person name="Melzer M."/>
            <person name="Roitsch T."/>
            <person name="Masuda T."/>
            <person name="Grimm B."/>
        </authorList>
    </citation>
    <scope>FUNCTION</scope>
    <scope>DISRUPTION PHENOTYPE</scope>
</reference>
<keyword id="KW-0150">Chloroplast</keyword>
<keyword id="KW-0342">GTP-binding</keyword>
<keyword id="KW-0378">Hydrolase</keyword>
<keyword id="KW-0456">Lyase</keyword>
<keyword id="KW-0460">Magnesium</keyword>
<keyword id="KW-0464">Manganese</keyword>
<keyword id="KW-0479">Metal-binding</keyword>
<keyword id="KW-0511">Multifunctional enzyme</keyword>
<keyword id="KW-0547">Nucleotide-binding</keyword>
<keyword id="KW-0934">Plastid</keyword>
<keyword id="KW-1185">Reference proteome</keyword>
<keyword id="KW-0686">Riboflavin biosynthesis</keyword>
<keyword id="KW-0809">Transit peptide</keyword>
<keyword id="KW-0862">Zinc</keyword>
<comment type="function">
    <text evidence="3 4">Involved in riboflavin biosynthesis. Catalyzes both the conversion of D-ribulose 5-phosphate to formate and 3,4-dihydroxy-2-butanone 4-phosphate and the conversion of GTP to 2,5-diamino-6-ribosylamino-4(3H)-pyrimidinone 5'-phosphate (DARP), formate and pyrophosphate. RIBA2 and RIBA3 together are not able to complement the loss of function of RIBA1.</text>
</comment>
<comment type="catalytic activity">
    <reaction evidence="4">
        <text>D-ribulose 5-phosphate = (2S)-2-hydroxy-3-oxobutyl phosphate + formate + H(+)</text>
        <dbReference type="Rhea" id="RHEA:18457"/>
        <dbReference type="ChEBI" id="CHEBI:15378"/>
        <dbReference type="ChEBI" id="CHEBI:15740"/>
        <dbReference type="ChEBI" id="CHEBI:58121"/>
        <dbReference type="ChEBI" id="CHEBI:58830"/>
        <dbReference type="EC" id="4.1.99.12"/>
    </reaction>
</comment>
<comment type="catalytic activity">
    <reaction evidence="4">
        <text>GTP + 4 H2O = 2,5-diamino-6-hydroxy-4-(5-phosphoribosylamino)-pyrimidine + formate + 2 phosphate + 3 H(+)</text>
        <dbReference type="Rhea" id="RHEA:23704"/>
        <dbReference type="ChEBI" id="CHEBI:15377"/>
        <dbReference type="ChEBI" id="CHEBI:15378"/>
        <dbReference type="ChEBI" id="CHEBI:15740"/>
        <dbReference type="ChEBI" id="CHEBI:37565"/>
        <dbReference type="ChEBI" id="CHEBI:43474"/>
        <dbReference type="ChEBI" id="CHEBI:58614"/>
        <dbReference type="EC" id="3.5.4.25"/>
    </reaction>
</comment>
<comment type="cofactor">
    <cofactor evidence="1">
        <name>Mg(2+)</name>
        <dbReference type="ChEBI" id="CHEBI:18420"/>
    </cofactor>
    <cofactor evidence="1">
        <name>Mn(2+)</name>
        <dbReference type="ChEBI" id="CHEBI:29035"/>
    </cofactor>
    <text evidence="1">Binds 2 divalent metal cations per subunit. Magnesium or manganese.</text>
</comment>
<comment type="cofactor">
    <cofactor evidence="1">
        <name>Zn(2+)</name>
        <dbReference type="ChEBI" id="CHEBI:29105"/>
    </cofactor>
    <text evidence="1">Binds 1 zinc ion per subunit.</text>
</comment>
<comment type="pathway">
    <text>Cofactor biosynthesis; riboflavin biosynthesis; 2-hydroxy-3-oxobutyl phosphate from D-ribulose 5-phosphate: step 1/1.</text>
</comment>
<comment type="pathway">
    <text>Cofactor biosynthesis; riboflavin biosynthesis; 5-amino-6-(D-ribitylamino)uracil from GTP: step 1/4.</text>
</comment>
<comment type="subcellular location">
    <subcellularLocation>
        <location evidence="4">Plastid</location>
        <location evidence="4">Chloroplast</location>
    </subcellularLocation>
</comment>
<comment type="tissue specificity">
    <text evidence="4">Expressed in leaves, shoots, roots, flowers and siliques.</text>
</comment>
<comment type="disruption phenotype">
    <text evidence="3">No visible phenotype when heterozygous. Bleached phenotype and no viable seeds produced when homozygous.</text>
</comment>
<comment type="similarity">
    <text evidence="5">In the N-terminal section; belongs to the DHBP synthase family.</text>
</comment>
<comment type="similarity">
    <text evidence="5">In the C-terminal section; belongs to the GTP cyclohydrolase II family.</text>
</comment>
<comment type="sequence caution" evidence="5">
    <conflict type="erroneous initiation">
        <sequence resource="EMBL-CDS" id="BAA08113"/>
    </conflict>
    <text>Truncated N-terminus.</text>
</comment>
<organism>
    <name type="scientific">Arabidopsis thaliana</name>
    <name type="common">Mouse-ear cress</name>
    <dbReference type="NCBI Taxonomy" id="3702"/>
    <lineage>
        <taxon>Eukaryota</taxon>
        <taxon>Viridiplantae</taxon>
        <taxon>Streptophyta</taxon>
        <taxon>Embryophyta</taxon>
        <taxon>Tracheophyta</taxon>
        <taxon>Spermatophyta</taxon>
        <taxon>Magnoliopsida</taxon>
        <taxon>eudicotyledons</taxon>
        <taxon>Gunneridae</taxon>
        <taxon>Pentapetalae</taxon>
        <taxon>rosids</taxon>
        <taxon>malvids</taxon>
        <taxon>Brassicales</taxon>
        <taxon>Brassicaceae</taxon>
        <taxon>Camelineae</taxon>
        <taxon>Arabidopsis</taxon>
    </lineage>
</organism>